<feature type="chain" id="PRO_1000053366" description="ATP synthase gamma chain">
    <location>
        <begin position="1"/>
        <end position="317"/>
    </location>
</feature>
<dbReference type="EMBL" id="CP000435">
    <property type="protein sequence ID" value="ABI46069.1"/>
    <property type="molecule type" value="Genomic_DNA"/>
</dbReference>
<dbReference type="RefSeq" id="WP_011620221.1">
    <property type="nucleotide sequence ID" value="NC_008319.1"/>
</dbReference>
<dbReference type="SMR" id="Q0I7R3"/>
<dbReference type="STRING" id="64471.sync_2312"/>
<dbReference type="KEGG" id="syg:sync_2312"/>
<dbReference type="eggNOG" id="COG0224">
    <property type="taxonomic scope" value="Bacteria"/>
</dbReference>
<dbReference type="HOGENOM" id="CLU_050669_0_0_3"/>
<dbReference type="OrthoDB" id="9812769at2"/>
<dbReference type="Proteomes" id="UP000001961">
    <property type="component" value="Chromosome"/>
</dbReference>
<dbReference type="GO" id="GO:0031676">
    <property type="term" value="C:plasma membrane-derived thylakoid membrane"/>
    <property type="evidence" value="ECO:0007669"/>
    <property type="project" value="UniProtKB-SubCell"/>
</dbReference>
<dbReference type="GO" id="GO:0045259">
    <property type="term" value="C:proton-transporting ATP synthase complex"/>
    <property type="evidence" value="ECO:0007669"/>
    <property type="project" value="UniProtKB-KW"/>
</dbReference>
<dbReference type="GO" id="GO:0005524">
    <property type="term" value="F:ATP binding"/>
    <property type="evidence" value="ECO:0007669"/>
    <property type="project" value="UniProtKB-UniRule"/>
</dbReference>
<dbReference type="GO" id="GO:0046933">
    <property type="term" value="F:proton-transporting ATP synthase activity, rotational mechanism"/>
    <property type="evidence" value="ECO:0007669"/>
    <property type="project" value="UniProtKB-UniRule"/>
</dbReference>
<dbReference type="CDD" id="cd12151">
    <property type="entry name" value="F1-ATPase_gamma"/>
    <property type="match status" value="1"/>
</dbReference>
<dbReference type="FunFam" id="3.40.1380.10:FF:000006">
    <property type="entry name" value="ATP synthase gamma chain"/>
    <property type="match status" value="1"/>
</dbReference>
<dbReference type="FunFam" id="1.10.287.80:FF:000003">
    <property type="entry name" value="ATP synthase gamma chain, chloroplastic"/>
    <property type="match status" value="1"/>
</dbReference>
<dbReference type="Gene3D" id="3.40.1380.10">
    <property type="match status" value="1"/>
</dbReference>
<dbReference type="Gene3D" id="1.10.287.80">
    <property type="entry name" value="ATP synthase, gamma subunit, helix hairpin domain"/>
    <property type="match status" value="2"/>
</dbReference>
<dbReference type="HAMAP" id="MF_00815">
    <property type="entry name" value="ATP_synth_gamma_bact"/>
    <property type="match status" value="1"/>
</dbReference>
<dbReference type="InterPro" id="IPR035968">
    <property type="entry name" value="ATP_synth_F1_ATPase_gsu"/>
</dbReference>
<dbReference type="InterPro" id="IPR000131">
    <property type="entry name" value="ATP_synth_F1_gsu"/>
</dbReference>
<dbReference type="NCBIfam" id="TIGR01146">
    <property type="entry name" value="ATPsyn_F1gamma"/>
    <property type="match status" value="1"/>
</dbReference>
<dbReference type="NCBIfam" id="NF004145">
    <property type="entry name" value="PRK05621.1-2"/>
    <property type="match status" value="1"/>
</dbReference>
<dbReference type="PANTHER" id="PTHR11693">
    <property type="entry name" value="ATP SYNTHASE GAMMA CHAIN"/>
    <property type="match status" value="1"/>
</dbReference>
<dbReference type="PANTHER" id="PTHR11693:SF41">
    <property type="entry name" value="ATP SYNTHASE GAMMA CHAIN, CHLOROPLASTIC"/>
    <property type="match status" value="1"/>
</dbReference>
<dbReference type="Pfam" id="PF00231">
    <property type="entry name" value="ATP-synt"/>
    <property type="match status" value="1"/>
</dbReference>
<dbReference type="PRINTS" id="PR00126">
    <property type="entry name" value="ATPASEGAMMA"/>
</dbReference>
<dbReference type="SUPFAM" id="SSF52943">
    <property type="entry name" value="ATP synthase (F1-ATPase), gamma subunit"/>
    <property type="match status" value="1"/>
</dbReference>
<sequence length="317" mass="34985">MANLKEIRDRIKSVKNTRKITEAMRLVAAAKVRRAQEQVLRSRPFADRLARLLENLQARMRFEDADAPLLEQRAVQTITLMAVTGDRGLCGGYNSNIIKRTEKRFAELQRQGYKVALVLIGRKAISYFTNRNYPIQATFTGLEQVPTADEAGSIASEIFAEFLSETSDRVEIIFTKFINLVSCKPVVQTLLPLDPQGIAEADDEIFRLTTKEGRLSVEAGSAPENSQPALPSDIVFEQSPDQLLNALLPLYLQNQLLRSLQESAASELASRMTAMNNASDNAKELAKTLTLDYNKARQAAITQEILEVVGGSAAAGA</sequence>
<organism>
    <name type="scientific">Synechococcus sp. (strain CC9311)</name>
    <dbReference type="NCBI Taxonomy" id="64471"/>
    <lineage>
        <taxon>Bacteria</taxon>
        <taxon>Bacillati</taxon>
        <taxon>Cyanobacteriota</taxon>
        <taxon>Cyanophyceae</taxon>
        <taxon>Synechococcales</taxon>
        <taxon>Synechococcaceae</taxon>
        <taxon>Synechococcus</taxon>
    </lineage>
</organism>
<reference key="1">
    <citation type="journal article" date="2006" name="Proc. Natl. Acad. Sci. U.S.A.">
        <title>Genome sequence of Synechococcus CC9311: insights into adaptation to a coastal environment.</title>
        <authorList>
            <person name="Palenik B."/>
            <person name="Ren Q."/>
            <person name="Dupont C.L."/>
            <person name="Myers G.S."/>
            <person name="Heidelberg J.F."/>
            <person name="Badger J.H."/>
            <person name="Madupu R."/>
            <person name="Nelson W.C."/>
            <person name="Brinkac L.M."/>
            <person name="Dodson R.J."/>
            <person name="Durkin A.S."/>
            <person name="Daugherty S.C."/>
            <person name="Sullivan S.A."/>
            <person name="Khouri H."/>
            <person name="Mohamoud Y."/>
            <person name="Halpin R."/>
            <person name="Paulsen I.T."/>
        </authorList>
    </citation>
    <scope>NUCLEOTIDE SEQUENCE [LARGE SCALE GENOMIC DNA]</scope>
    <source>
        <strain>CC9311</strain>
    </source>
</reference>
<proteinExistence type="inferred from homology"/>
<keyword id="KW-0066">ATP synthesis</keyword>
<keyword id="KW-0139">CF(1)</keyword>
<keyword id="KW-0375">Hydrogen ion transport</keyword>
<keyword id="KW-0406">Ion transport</keyword>
<keyword id="KW-0472">Membrane</keyword>
<keyword id="KW-1185">Reference proteome</keyword>
<keyword id="KW-0793">Thylakoid</keyword>
<keyword id="KW-0813">Transport</keyword>
<evidence type="ECO:0000255" key="1">
    <source>
        <dbReference type="HAMAP-Rule" id="MF_00815"/>
    </source>
</evidence>
<accession>Q0I7R3</accession>
<protein>
    <recommendedName>
        <fullName evidence="1">ATP synthase gamma chain</fullName>
    </recommendedName>
    <alternativeName>
        <fullName evidence="1">ATP synthase F1 sector gamma subunit</fullName>
    </alternativeName>
    <alternativeName>
        <fullName evidence="1">F-ATPase gamma subunit</fullName>
    </alternativeName>
</protein>
<comment type="function">
    <text evidence="1">Produces ATP from ADP in the presence of a proton gradient across the membrane. The gamma chain is believed to be important in regulating ATPase activity and the flow of protons through the CF(0) complex.</text>
</comment>
<comment type="subunit">
    <text evidence="1">F-type ATPases have 2 components, CF(1) - the catalytic core - and CF(0) - the membrane proton channel. CF(1) has five subunits: alpha(3), beta(3), gamma(1), delta(1), epsilon(1). CF(0) has three main subunits: a, b and c.</text>
</comment>
<comment type="subcellular location">
    <subcellularLocation>
        <location evidence="1">Cellular thylakoid membrane</location>
        <topology evidence="1">Peripheral membrane protein</topology>
    </subcellularLocation>
</comment>
<comment type="similarity">
    <text evidence="1">Belongs to the ATPase gamma chain family.</text>
</comment>
<gene>
    <name evidence="1" type="primary">atpG</name>
    <name evidence="1" type="synonym">atpC</name>
    <name type="ordered locus">sync_2312</name>
</gene>
<name>ATPG_SYNS3</name>